<comment type="function">
    <text evidence="1 5 12">Active toward triacylglycerides with a preference for esters with C8:0 acyl groups; barely active on C18:1 or C18:4 substrates. Active against p-nitrophenylesters with fatty acid chain lengths from C6 to C18.</text>
</comment>
<comment type="catalytic activity">
    <reaction evidence="1 5">
        <text>a triacylglycerol + H2O = a diacylglycerol + a fatty acid + H(+)</text>
        <dbReference type="Rhea" id="RHEA:12044"/>
        <dbReference type="ChEBI" id="CHEBI:15377"/>
        <dbReference type="ChEBI" id="CHEBI:15378"/>
        <dbReference type="ChEBI" id="CHEBI:17855"/>
        <dbReference type="ChEBI" id="CHEBI:18035"/>
        <dbReference type="ChEBI" id="CHEBI:28868"/>
        <dbReference type="EC" id="3.1.1.3"/>
    </reaction>
</comment>
<comment type="activity regulation">
    <text evidence="5">Strongly inhibited when incubated with the serine reagent phenylmethylsulfonyl fluoride. Activated by the addition of calcium to the reaction mixture. When calcium was incubated with the lipase but not added to the reaction mixture, its effect is lower but still observable. Magnesium, manganese and strontium are not able to replace calcium with full retention of activity.</text>
</comment>
<comment type="biophysicochemical properties">
    <phDependence>
        <text evidence="1 5">Optimum pH is 10 (PubMed:11029590). The activity decreases strongly above pH 10.5 or below pH 6.5. The enzyme is remarkably stable at alkaline pH, showing maximum stability at pH 12 and retaining more than 65% of its activity after 24 hours at pH 13 (PubMed:8396026).</text>
    </phDependence>
    <temperatureDependence>
        <text evidence="1 5">Optimum temperature is 35 degrees Celsius. Stable for at least 30 minutes at 40 degrees Celsius. Virtually no activity remains after 30 minutes at 55 degrees Celsius.</text>
    </temperatureDependence>
</comment>
<comment type="subunit">
    <text evidence="2 4">Monomer.</text>
</comment>
<comment type="subcellular location">
    <subcellularLocation>
        <location evidence="3 5">Secreted</location>
    </subcellularLocation>
</comment>
<comment type="induction">
    <text evidence="3 5">Maximally expressed in late exponential growth phase. Expression decreases rapidly in the stationary phase. Expressed in both rich and minimal media with glucose as carbon source (at protein level).</text>
</comment>
<comment type="similarity">
    <text evidence="8">Belongs to the AB hydrolase superfamily.</text>
</comment>
<organism>
    <name type="scientific">Bacillus subtilis (strain 168)</name>
    <dbReference type="NCBI Taxonomy" id="224308"/>
    <lineage>
        <taxon>Bacteria</taxon>
        <taxon>Bacillati</taxon>
        <taxon>Bacillota</taxon>
        <taxon>Bacilli</taxon>
        <taxon>Bacillales</taxon>
        <taxon>Bacillaceae</taxon>
        <taxon>Bacillus</taxon>
    </lineage>
</organism>
<feature type="signal peptide" evidence="13">
    <location>
        <begin position="1"/>
        <end position="31"/>
    </location>
</feature>
<feature type="chain" id="PRO_0000017819" description="Lipase EstA">
    <location>
        <begin position="32"/>
        <end position="212"/>
    </location>
</feature>
<feature type="active site" description="Nucleophile" evidence="9 10 11">
    <location>
        <position position="108"/>
    </location>
</feature>
<feature type="active site" description="Charge relay system" evidence="9 10 11">
    <location>
        <position position="164"/>
    </location>
</feature>
<feature type="active site" description="Charge relay system" evidence="9 10 11">
    <location>
        <position position="187"/>
    </location>
</feature>
<feature type="sequence conflict" description="In Ref. 3; ABB54395." evidence="8" ref="3">
    <original>A</original>
    <variation>V</variation>
    <location>
        <position position="29"/>
    </location>
</feature>
<feature type="sequence conflict" description="In Ref. 3; ABB54395." evidence="8" ref="3">
    <original>A</original>
    <variation>G</variation>
    <location>
        <position position="51"/>
    </location>
</feature>
<feature type="sequence conflict" description="In Ref. 3; ABB54395." evidence="8" ref="3">
    <original>Q</original>
    <variation>H</variation>
    <location>
        <position position="60"/>
    </location>
</feature>
<feature type="sequence conflict" description="In Ref. 1; AAA22574 and 3; ABB54395." evidence="8" ref="1 3">
    <original>L</original>
    <variation>V</variation>
    <location>
        <position position="133"/>
    </location>
</feature>
<feature type="strand" evidence="16">
    <location>
        <begin position="37"/>
        <end position="40"/>
    </location>
</feature>
<feature type="helix" evidence="16">
    <location>
        <begin position="47"/>
        <end position="50"/>
    </location>
</feature>
<feature type="helix" evidence="16">
    <location>
        <begin position="51"/>
        <end position="59"/>
    </location>
</feature>
<feature type="helix" evidence="16">
    <location>
        <begin position="64"/>
        <end position="66"/>
    </location>
</feature>
<feature type="strand" evidence="16">
    <location>
        <begin position="67"/>
        <end position="69"/>
    </location>
</feature>
<feature type="helix" evidence="16">
    <location>
        <begin position="79"/>
        <end position="97"/>
    </location>
</feature>
<feature type="strand" evidence="16">
    <location>
        <begin position="102"/>
        <end position="107"/>
    </location>
</feature>
<feature type="helix" evidence="16">
    <location>
        <begin position="110"/>
        <end position="120"/>
    </location>
</feature>
<feature type="helix" evidence="16">
    <location>
        <begin position="123"/>
        <end position="125"/>
    </location>
</feature>
<feature type="strand" evidence="16">
    <location>
        <begin position="127"/>
        <end position="134"/>
    </location>
</feature>
<feature type="helix" evidence="16">
    <location>
        <begin position="137"/>
        <end position="139"/>
    </location>
</feature>
<feature type="strand" evidence="16">
    <location>
        <begin position="155"/>
        <end position="161"/>
    </location>
</feature>
<feature type="strand" evidence="16">
    <location>
        <begin position="165"/>
        <end position="167"/>
    </location>
</feature>
<feature type="helix" evidence="16">
    <location>
        <begin position="169"/>
        <end position="172"/>
    </location>
</feature>
<feature type="strand" evidence="16">
    <location>
        <begin position="177"/>
        <end position="184"/>
    </location>
</feature>
<feature type="helix" evidence="16">
    <location>
        <begin position="189"/>
        <end position="191"/>
    </location>
</feature>
<feature type="helix" evidence="16">
    <location>
        <begin position="194"/>
        <end position="204"/>
    </location>
</feature>
<feature type="turn" evidence="16">
    <location>
        <begin position="205"/>
        <end position="207"/>
    </location>
</feature>
<keyword id="KW-0002">3D-structure</keyword>
<keyword id="KW-0378">Hydrolase</keyword>
<keyword id="KW-0442">Lipid degradation</keyword>
<keyword id="KW-0443">Lipid metabolism</keyword>
<keyword id="KW-1185">Reference proteome</keyword>
<keyword id="KW-0964">Secreted</keyword>
<keyword id="KW-0732">Signal</keyword>
<name>ESTA_BACSU</name>
<proteinExistence type="evidence at protein level"/>
<accession>P37957</accession>
<accession>O34644</accession>
<accession>Q2XU59</accession>
<gene>
    <name type="primary">estA</name>
    <name evidence="7" type="synonym">lip</name>
    <name evidence="6" type="synonym">lipA</name>
    <name type="ordered locus">BSU02700</name>
</gene>
<dbReference type="EC" id="3.1.1.3" evidence="1 5"/>
<dbReference type="EMBL" id="M74010">
    <property type="protein sequence ID" value="AAA22574.1"/>
    <property type="molecule type" value="Genomic_DNA"/>
</dbReference>
<dbReference type="EMBL" id="AB000617">
    <property type="protein sequence ID" value="BAA22231.1"/>
    <property type="molecule type" value="Genomic_DNA"/>
</dbReference>
<dbReference type="EMBL" id="DQ250714">
    <property type="protein sequence ID" value="ABB54395.1"/>
    <property type="molecule type" value="Genomic_DNA"/>
</dbReference>
<dbReference type="EMBL" id="AL009126">
    <property type="protein sequence ID" value="CAB12064.1"/>
    <property type="molecule type" value="Genomic_DNA"/>
</dbReference>
<dbReference type="PIR" id="S23934">
    <property type="entry name" value="S23934"/>
</dbReference>
<dbReference type="RefSeq" id="NP_388152.1">
    <property type="nucleotide sequence ID" value="NC_000964.3"/>
</dbReference>
<dbReference type="RefSeq" id="WP_003246250.1">
    <property type="nucleotide sequence ID" value="NZ_OZ025638.1"/>
</dbReference>
<dbReference type="PDB" id="1I6W">
    <property type="method" value="X-ray"/>
    <property type="resolution" value="1.50 A"/>
    <property type="chains" value="A/B=32-212"/>
</dbReference>
<dbReference type="PDB" id="1ISP">
    <property type="method" value="X-ray"/>
    <property type="resolution" value="1.30 A"/>
    <property type="chains" value="A=32-212"/>
</dbReference>
<dbReference type="PDB" id="1R4Z">
    <property type="method" value="X-ray"/>
    <property type="resolution" value="1.80 A"/>
    <property type="chains" value="A/B=32-212"/>
</dbReference>
<dbReference type="PDB" id="1R50">
    <property type="method" value="X-ray"/>
    <property type="resolution" value="1.45 A"/>
    <property type="chains" value="A/B=32-212"/>
</dbReference>
<dbReference type="PDB" id="1T2N">
    <property type="method" value="X-ray"/>
    <property type="resolution" value="1.80 A"/>
    <property type="chains" value="A=32-212"/>
</dbReference>
<dbReference type="PDB" id="1T4M">
    <property type="method" value="X-ray"/>
    <property type="resolution" value="2.00 A"/>
    <property type="chains" value="A=32-212"/>
</dbReference>
<dbReference type="PDB" id="2QXT">
    <property type="method" value="X-ray"/>
    <property type="resolution" value="2.00 A"/>
    <property type="chains" value="A/B=34-212"/>
</dbReference>
<dbReference type="PDB" id="2QXU">
    <property type="method" value="X-ray"/>
    <property type="resolution" value="1.90 A"/>
    <property type="chains" value="A/B/C/D/E/F/G/H=34-212"/>
</dbReference>
<dbReference type="PDB" id="3D2A">
    <property type="method" value="X-ray"/>
    <property type="resolution" value="1.73 A"/>
    <property type="chains" value="A=32-212"/>
</dbReference>
<dbReference type="PDB" id="3D2B">
    <property type="method" value="X-ray"/>
    <property type="resolution" value="1.95 A"/>
    <property type="chains" value="A/B=32-212"/>
</dbReference>
<dbReference type="PDB" id="3D2C">
    <property type="method" value="X-ray"/>
    <property type="resolution" value="2.18 A"/>
    <property type="chains" value="A/B/C/D/E/F/G/H/I/J/K/L=32-212"/>
</dbReference>
<dbReference type="PDB" id="3QMM">
    <property type="method" value="X-ray"/>
    <property type="resolution" value="1.89 A"/>
    <property type="chains" value="A/B=32-212"/>
</dbReference>
<dbReference type="PDB" id="3QZU">
    <property type="method" value="X-ray"/>
    <property type="resolution" value="1.85 A"/>
    <property type="chains" value="A/B=32-212"/>
</dbReference>
<dbReference type="PDB" id="5CRI">
    <property type="method" value="X-ray"/>
    <property type="resolution" value="1.63 A"/>
    <property type="chains" value="A/B=32-212"/>
</dbReference>
<dbReference type="PDB" id="5CT4">
    <property type="method" value="X-ray"/>
    <property type="resolution" value="1.49 A"/>
    <property type="chains" value="A/B=33-212"/>
</dbReference>
<dbReference type="PDB" id="5CT5">
    <property type="method" value="X-ray"/>
    <property type="resolution" value="1.75 A"/>
    <property type="chains" value="A/B=33-212"/>
</dbReference>
<dbReference type="PDB" id="5CT6">
    <property type="method" value="X-ray"/>
    <property type="resolution" value="1.90 A"/>
    <property type="chains" value="A/B=33-212"/>
</dbReference>
<dbReference type="PDB" id="5CT8">
    <property type="method" value="X-ray"/>
    <property type="resolution" value="1.29 A"/>
    <property type="chains" value="A=33-212"/>
</dbReference>
<dbReference type="PDB" id="5CT9">
    <property type="method" value="X-ray"/>
    <property type="resolution" value="1.40 A"/>
    <property type="chains" value="A=33-212"/>
</dbReference>
<dbReference type="PDB" id="5CTA">
    <property type="method" value="X-ray"/>
    <property type="resolution" value="1.24 A"/>
    <property type="chains" value="A=33-212"/>
</dbReference>
<dbReference type="PDB" id="5CUR">
    <property type="method" value="X-ray"/>
    <property type="resolution" value="1.30 A"/>
    <property type="chains" value="A=33-212"/>
</dbReference>
<dbReference type="PDBsum" id="1I6W"/>
<dbReference type="PDBsum" id="1ISP"/>
<dbReference type="PDBsum" id="1R4Z"/>
<dbReference type="PDBsum" id="1R50"/>
<dbReference type="PDBsum" id="1T2N"/>
<dbReference type="PDBsum" id="1T4M"/>
<dbReference type="PDBsum" id="2QXT"/>
<dbReference type="PDBsum" id="2QXU"/>
<dbReference type="PDBsum" id="3D2A"/>
<dbReference type="PDBsum" id="3D2B"/>
<dbReference type="PDBsum" id="3D2C"/>
<dbReference type="PDBsum" id="3QMM"/>
<dbReference type="PDBsum" id="3QZU"/>
<dbReference type="PDBsum" id="5CRI"/>
<dbReference type="PDBsum" id="5CT4"/>
<dbReference type="PDBsum" id="5CT5"/>
<dbReference type="PDBsum" id="5CT6"/>
<dbReference type="PDBsum" id="5CT8"/>
<dbReference type="PDBsum" id="5CT9"/>
<dbReference type="PDBsum" id="5CTA"/>
<dbReference type="PDBsum" id="5CUR"/>
<dbReference type="BMRB" id="P37957"/>
<dbReference type="SMR" id="P37957"/>
<dbReference type="FunCoup" id="P37957">
    <property type="interactions" value="40"/>
</dbReference>
<dbReference type="STRING" id="224308.BSU02700"/>
<dbReference type="DrugBank" id="DB08475">
    <property type="generic name" value="[(4R)-2,2-dimethyl-1,3-dioxolan-4-yl]methyl hydrogen hex-5-enylphosphonate"/>
</dbReference>
<dbReference type="DrugBank" id="DB08548">
    <property type="generic name" value="[(4S)-2,2-dimethyl-1,3-dioxolan-4-yl]methyl hydrogen hex-5-enylphosphonate"/>
</dbReference>
<dbReference type="ESTHER" id="bacsu-lip">
    <property type="family name" value="Lipase_2"/>
</dbReference>
<dbReference type="PaxDb" id="224308-BSU02700"/>
<dbReference type="EnsemblBacteria" id="CAB12064">
    <property type="protein sequence ID" value="CAB12064"/>
    <property type="gene ID" value="BSU_02700"/>
</dbReference>
<dbReference type="GeneID" id="938389"/>
<dbReference type="KEGG" id="bsu:BSU02700"/>
<dbReference type="PATRIC" id="fig|224308.179.peg.280"/>
<dbReference type="eggNOG" id="COG1075">
    <property type="taxonomic scope" value="Bacteria"/>
</dbReference>
<dbReference type="InParanoid" id="P37957"/>
<dbReference type="OrthoDB" id="503948at2"/>
<dbReference type="PhylomeDB" id="P37957"/>
<dbReference type="BioCyc" id="BSUB:BSU02700-MONOMER"/>
<dbReference type="SABIO-RK" id="P37957"/>
<dbReference type="EvolutionaryTrace" id="P37957"/>
<dbReference type="Proteomes" id="UP000001570">
    <property type="component" value="Chromosome"/>
</dbReference>
<dbReference type="GO" id="GO:0005576">
    <property type="term" value="C:extracellular region"/>
    <property type="evidence" value="ECO:0007669"/>
    <property type="project" value="UniProtKB-SubCell"/>
</dbReference>
<dbReference type="GO" id="GO:0016298">
    <property type="term" value="F:lipase activity"/>
    <property type="evidence" value="ECO:0000318"/>
    <property type="project" value="GO_Central"/>
</dbReference>
<dbReference type="GO" id="GO:0004806">
    <property type="term" value="F:triacylglycerol lipase activity"/>
    <property type="evidence" value="ECO:0000314"/>
    <property type="project" value="CACAO"/>
</dbReference>
<dbReference type="GO" id="GO:0016042">
    <property type="term" value="P:lipid catabolic process"/>
    <property type="evidence" value="ECO:0000318"/>
    <property type="project" value="GO_Central"/>
</dbReference>
<dbReference type="FunFam" id="3.40.50.1820:FF:000182">
    <property type="entry name" value="Lipase EstA"/>
    <property type="match status" value="1"/>
</dbReference>
<dbReference type="Gene3D" id="3.40.50.1820">
    <property type="entry name" value="alpha/beta hydrolase"/>
    <property type="match status" value="1"/>
</dbReference>
<dbReference type="InterPro" id="IPR029058">
    <property type="entry name" value="AB_hydrolase_fold"/>
</dbReference>
<dbReference type="InterPro" id="IPR002918">
    <property type="entry name" value="Lipase_EstA/Esterase_EstB"/>
</dbReference>
<dbReference type="PANTHER" id="PTHR32015">
    <property type="entry name" value="FASTING INDUCED LIPASE"/>
    <property type="match status" value="1"/>
</dbReference>
<dbReference type="PANTHER" id="PTHR32015:SF1">
    <property type="entry name" value="LIPASE"/>
    <property type="match status" value="1"/>
</dbReference>
<dbReference type="Pfam" id="PF01674">
    <property type="entry name" value="Lipase_2"/>
    <property type="match status" value="1"/>
</dbReference>
<dbReference type="SUPFAM" id="SSF53474">
    <property type="entry name" value="alpha/beta-Hydrolases"/>
    <property type="match status" value="1"/>
</dbReference>
<reference key="1">
    <citation type="journal article" date="1992" name="Biochim. Biophys. Acta">
        <title>Cloning, nucleotide sequence and expression in Escherichia coli of a lipase gene from Bacillus subtilis 168.</title>
        <authorList>
            <person name="Dartois V."/>
            <person name="Baulard A."/>
            <person name="Schanck K."/>
            <person name="Colson C."/>
        </authorList>
    </citation>
    <scope>NUCLEOTIDE SEQUENCE [GENOMIC DNA]</scope>
    <scope>FUNCTION</scope>
    <source>
        <strain>168</strain>
    </source>
</reference>
<reference key="2">
    <citation type="journal article" date="1997" name="Microbiology">
        <title>A 32 kb nucleotide sequence from the region of the lincomycin-resistance gene (22 degrees-25 degrees) of the Bacillus subtilis chromosome and identification of the site of the lin-2 mutation.</title>
        <authorList>
            <person name="Kumano M."/>
            <person name="Tamakoshi A."/>
            <person name="Yamane K."/>
        </authorList>
    </citation>
    <scope>NUCLEOTIDE SEQUENCE [GENOMIC DNA]</scope>
    <source>
        <strain>168</strain>
    </source>
</reference>
<reference key="3">
    <citation type="submission" date="2005-10" db="EMBL/GenBank/DDBJ databases">
        <title>Molecular characterization of a lipase from a strain of Bacillus subtilis.</title>
        <authorList>
            <person name="Peerzada K."/>
            <person name="Johri S."/>
            <person name="Rasool S."/>
            <person name="Qazi G.N."/>
        </authorList>
    </citation>
    <scope>NUCLEOTIDE SEQUENCE [GENOMIC DNA]</scope>
</reference>
<reference key="4">
    <citation type="journal article" date="1997" name="Nature">
        <title>The complete genome sequence of the Gram-positive bacterium Bacillus subtilis.</title>
        <authorList>
            <person name="Kunst F."/>
            <person name="Ogasawara N."/>
            <person name="Moszer I."/>
            <person name="Albertini A.M."/>
            <person name="Alloni G."/>
            <person name="Azevedo V."/>
            <person name="Bertero M.G."/>
            <person name="Bessieres P."/>
            <person name="Bolotin A."/>
            <person name="Borchert S."/>
            <person name="Borriss R."/>
            <person name="Boursier L."/>
            <person name="Brans A."/>
            <person name="Braun M."/>
            <person name="Brignell S.C."/>
            <person name="Bron S."/>
            <person name="Brouillet S."/>
            <person name="Bruschi C.V."/>
            <person name="Caldwell B."/>
            <person name="Capuano V."/>
            <person name="Carter N.M."/>
            <person name="Choi S.-K."/>
            <person name="Codani J.-J."/>
            <person name="Connerton I.F."/>
            <person name="Cummings N.J."/>
            <person name="Daniel R.A."/>
            <person name="Denizot F."/>
            <person name="Devine K.M."/>
            <person name="Duesterhoeft A."/>
            <person name="Ehrlich S.D."/>
            <person name="Emmerson P.T."/>
            <person name="Entian K.-D."/>
            <person name="Errington J."/>
            <person name="Fabret C."/>
            <person name="Ferrari E."/>
            <person name="Foulger D."/>
            <person name="Fritz C."/>
            <person name="Fujita M."/>
            <person name="Fujita Y."/>
            <person name="Fuma S."/>
            <person name="Galizzi A."/>
            <person name="Galleron N."/>
            <person name="Ghim S.-Y."/>
            <person name="Glaser P."/>
            <person name="Goffeau A."/>
            <person name="Golightly E.J."/>
            <person name="Grandi G."/>
            <person name="Guiseppi G."/>
            <person name="Guy B.J."/>
            <person name="Haga K."/>
            <person name="Haiech J."/>
            <person name="Harwood C.R."/>
            <person name="Henaut A."/>
            <person name="Hilbert H."/>
            <person name="Holsappel S."/>
            <person name="Hosono S."/>
            <person name="Hullo M.-F."/>
            <person name="Itaya M."/>
            <person name="Jones L.-M."/>
            <person name="Joris B."/>
            <person name="Karamata D."/>
            <person name="Kasahara Y."/>
            <person name="Klaerr-Blanchard M."/>
            <person name="Klein C."/>
            <person name="Kobayashi Y."/>
            <person name="Koetter P."/>
            <person name="Koningstein G."/>
            <person name="Krogh S."/>
            <person name="Kumano M."/>
            <person name="Kurita K."/>
            <person name="Lapidus A."/>
            <person name="Lardinois S."/>
            <person name="Lauber J."/>
            <person name="Lazarevic V."/>
            <person name="Lee S.-M."/>
            <person name="Levine A."/>
            <person name="Liu H."/>
            <person name="Masuda S."/>
            <person name="Mauel C."/>
            <person name="Medigue C."/>
            <person name="Medina N."/>
            <person name="Mellado R.P."/>
            <person name="Mizuno M."/>
            <person name="Moestl D."/>
            <person name="Nakai S."/>
            <person name="Noback M."/>
            <person name="Noone D."/>
            <person name="O'Reilly M."/>
            <person name="Ogawa K."/>
            <person name="Ogiwara A."/>
            <person name="Oudega B."/>
            <person name="Park S.-H."/>
            <person name="Parro V."/>
            <person name="Pohl T.M."/>
            <person name="Portetelle D."/>
            <person name="Porwollik S."/>
            <person name="Prescott A.M."/>
            <person name="Presecan E."/>
            <person name="Pujic P."/>
            <person name="Purnelle B."/>
            <person name="Rapoport G."/>
            <person name="Rey M."/>
            <person name="Reynolds S."/>
            <person name="Rieger M."/>
            <person name="Rivolta C."/>
            <person name="Rocha E."/>
            <person name="Roche B."/>
            <person name="Rose M."/>
            <person name="Sadaie Y."/>
            <person name="Sato T."/>
            <person name="Scanlan E."/>
            <person name="Schleich S."/>
            <person name="Schroeter R."/>
            <person name="Scoffone F."/>
            <person name="Sekiguchi J."/>
            <person name="Sekowska A."/>
            <person name="Seror S.J."/>
            <person name="Serror P."/>
            <person name="Shin B.-S."/>
            <person name="Soldo B."/>
            <person name="Sorokin A."/>
            <person name="Tacconi E."/>
            <person name="Takagi T."/>
            <person name="Takahashi H."/>
            <person name="Takemaru K."/>
            <person name="Takeuchi M."/>
            <person name="Tamakoshi A."/>
            <person name="Tanaka T."/>
            <person name="Terpstra P."/>
            <person name="Tognoni A."/>
            <person name="Tosato V."/>
            <person name="Uchiyama S."/>
            <person name="Vandenbol M."/>
            <person name="Vannier F."/>
            <person name="Vassarotti A."/>
            <person name="Viari A."/>
            <person name="Wambutt R."/>
            <person name="Wedler E."/>
            <person name="Wedler H."/>
            <person name="Weitzenegger T."/>
            <person name="Winters P."/>
            <person name="Wipat A."/>
            <person name="Yamamoto H."/>
            <person name="Yamane K."/>
            <person name="Yasumoto K."/>
            <person name="Yata K."/>
            <person name="Yoshida K."/>
            <person name="Yoshikawa H.-F."/>
            <person name="Zumstein E."/>
            <person name="Yoshikawa H."/>
            <person name="Danchin A."/>
        </authorList>
    </citation>
    <scope>NUCLEOTIDE SEQUENCE [LARGE SCALE GENOMIC DNA]</scope>
    <source>
        <strain>168</strain>
    </source>
</reference>
<reference key="5">
    <citation type="journal article" date="1993" name="Eur. J. Biochem.">
        <title>Purification and preliminary characterization of the extracellular lipase of Bacillus subtilis 168, an extremely basic pH-tolerant enzyme.</title>
        <authorList>
            <person name="Lesuisse E."/>
            <person name="Schanck K."/>
            <person name="Colson C."/>
        </authorList>
    </citation>
    <scope>FUNCTION</scope>
    <scope>CATALYTIC ACTIVITY</scope>
    <scope>ACTIVITY REGULATION</scope>
    <scope>BIOPHYSICOCHEMICAL PROPERTIES</scope>
    <scope>SUBCELLULAR LOCATION</scope>
    <scope>INDUCTION</scope>
    <scope>N-TERMINAL END</scope>
    <source>
        <strain>168</strain>
    </source>
</reference>
<reference key="6">
    <citation type="journal article" date="2000" name="Eur. J. Biochem.">
        <title>A novel extracellular esterase from Bacillus subtilis and its conversion to a monoacylglycerol hydrolase.</title>
        <authorList>
            <person name="Eggert T."/>
            <person name="Pencreac'h G."/>
            <person name="Douchet I."/>
            <person name="Verger R."/>
            <person name="Jaeger K.-E."/>
        </authorList>
    </citation>
    <scope>FUNCTION</scope>
    <scope>CATALYTIC ACTIVITY</scope>
    <scope>SUBSTRATE SPECIFICITY</scope>
    <scope>BIOPHYSICOCHEMICAL PROPERTIES</scope>
    <source>
        <strain>168 / BCL 1050</strain>
    </source>
</reference>
<reference key="7">
    <citation type="journal article" date="2001" name="FEBS Lett.">
        <title>Lipolytic enzymes LipA and LipB from Bacillus subtilis differ in regulation of gene expression, biochemical properties, and three-dimensional structure.</title>
        <authorList>
            <person name="Eggert T."/>
            <person name="van Pouderoyen G."/>
            <person name="Dijkstra B.W."/>
            <person name="Jaeger K.-E."/>
        </authorList>
    </citation>
    <scope>PROBABLE ACTIVE SITE</scope>
    <scope>SUBCELLULAR LOCATION</scope>
    <scope>INDUCTION</scope>
    <source>
        <strain>168 / BCL 1050</strain>
    </source>
</reference>
<reference evidence="14" key="8">
    <citation type="journal article" date="2001" name="J. Mol. Biol.">
        <title>The crystal structure of Bacillus subtilis lipase: a minimal alpha/beta hydrolase fold enzyme.</title>
        <authorList>
            <person name="van Pouderoyen G."/>
            <person name="Eggert T."/>
            <person name="Jaeger K.-E."/>
            <person name="Dijkstra B.W."/>
        </authorList>
    </citation>
    <scope>X-RAY CRYSTALLOGRAPHY (1.5 ANGSTROMS) OF 32-212</scope>
    <scope>PROBABLE ACTIVE SITE</scope>
    <scope>PROBABLE SUBUNIT</scope>
    <source>
        <strain>168</strain>
    </source>
</reference>
<reference evidence="15" key="9">
    <citation type="journal article" date="2002" name="Acta Crystallogr. D">
        <title>Alternate conformations observed in catalytic serine of Bacillus subtilis lipase determined at 1.3 A resolution.</title>
        <authorList>
            <person name="Kawasaki K."/>
            <person name="Kondo H."/>
            <person name="Suzuki M."/>
            <person name="Ohgiya S."/>
            <person name="Tsuda S."/>
        </authorList>
    </citation>
    <scope>X-RAY CRYSTALLOGRAPHY (1.3 ANGSTROMS) OF 32-212</scope>
    <scope>PROBABLE ACTIVE SITE</scope>
    <scope>SUBUNIT</scope>
    <source>
        <strain>168</strain>
    </source>
</reference>
<sequence length="212" mass="22791">MKFVKRRIIALVTILMLSVTSLFALQPSAKAAEHNPVVMVHGIGGASFNFAGIKSYLVSQGWSRDKLYAVDFWDKTGTNYNNGPVLSRFVQKVLDETGAKKVDIVAHSMGGANTLYYIKNLDGGNKVANVVTLGGANRLTTGKALPGTDPNQKILYTSIYSSADMIVMNYLSRLDGARNVQIHGVGHIGLLYSSQVNSLIKEGLNGGGQNTN</sequence>
<evidence type="ECO:0000269" key="1">
    <source>
    </source>
</evidence>
<evidence type="ECO:0000269" key="2">
    <source>
    </source>
</evidence>
<evidence type="ECO:0000269" key="3">
    <source>
    </source>
</evidence>
<evidence type="ECO:0000269" key="4">
    <source>
    </source>
</evidence>
<evidence type="ECO:0000269" key="5">
    <source>
    </source>
</evidence>
<evidence type="ECO:0000303" key="6">
    <source>
    </source>
</evidence>
<evidence type="ECO:0000303" key="7">
    <source>
    </source>
</evidence>
<evidence type="ECO:0000305" key="8"/>
<evidence type="ECO:0000305" key="9">
    <source>
    </source>
</evidence>
<evidence type="ECO:0000305" key="10">
    <source>
    </source>
</evidence>
<evidence type="ECO:0000305" key="11">
    <source>
    </source>
</evidence>
<evidence type="ECO:0000305" key="12">
    <source>
    </source>
</evidence>
<evidence type="ECO:0000305" key="13">
    <source>
    </source>
</evidence>
<evidence type="ECO:0007744" key="14">
    <source>
        <dbReference type="PDB" id="1I6W"/>
    </source>
</evidence>
<evidence type="ECO:0007744" key="15">
    <source>
        <dbReference type="PDB" id="1ISP"/>
    </source>
</evidence>
<evidence type="ECO:0007829" key="16">
    <source>
        <dbReference type="PDB" id="5CTA"/>
    </source>
</evidence>
<protein>
    <recommendedName>
        <fullName>Lipase EstA</fullName>
    </recommendedName>
    <alternativeName>
        <fullName>Lipase A</fullName>
        <ecNumber evidence="1 5">3.1.1.3</ecNumber>
    </alternativeName>
    <alternativeName>
        <fullName>Triacylglycerol lipase</fullName>
    </alternativeName>
</protein>